<reference key="1">
    <citation type="submission" date="1999-05" db="EMBL/GenBank/DDBJ databases">
        <title>A novel gene which is overexpressed in advanced bladder cancer.</title>
        <authorList>
            <person name="Luscombe M.J."/>
            <person name="Knowles M.A."/>
        </authorList>
    </citation>
    <scope>NUCLEOTIDE SEQUENCE [MRNA]</scope>
</reference>
<reference key="2">
    <citation type="journal article" date="2003" name="Genome Res.">
        <title>The secreted protein discovery initiative (SPDI), a large-scale effort to identify novel human secreted and transmembrane proteins: a bioinformatics assessment.</title>
        <authorList>
            <person name="Clark H.F."/>
            <person name="Gurney A.L."/>
            <person name="Abaya E."/>
            <person name="Baker K."/>
            <person name="Baldwin D.T."/>
            <person name="Brush J."/>
            <person name="Chen J."/>
            <person name="Chow B."/>
            <person name="Chui C."/>
            <person name="Crowley C."/>
            <person name="Currell B."/>
            <person name="Deuel B."/>
            <person name="Dowd P."/>
            <person name="Eaton D."/>
            <person name="Foster J.S."/>
            <person name="Grimaldi C."/>
            <person name="Gu Q."/>
            <person name="Hass P.E."/>
            <person name="Heldens S."/>
            <person name="Huang A."/>
            <person name="Kim H.S."/>
            <person name="Klimowski L."/>
            <person name="Jin Y."/>
            <person name="Johnson S."/>
            <person name="Lee J."/>
            <person name="Lewis L."/>
            <person name="Liao D."/>
            <person name="Mark M.R."/>
            <person name="Robbie E."/>
            <person name="Sanchez C."/>
            <person name="Schoenfeld J."/>
            <person name="Seshagiri S."/>
            <person name="Simmons L."/>
            <person name="Singh J."/>
            <person name="Smith V."/>
            <person name="Stinson J."/>
            <person name="Vagts A."/>
            <person name="Vandlen R.L."/>
            <person name="Watanabe C."/>
            <person name="Wieand D."/>
            <person name="Woods K."/>
            <person name="Xie M.-H."/>
            <person name="Yansura D.G."/>
            <person name="Yi S."/>
            <person name="Yu G."/>
            <person name="Yuan J."/>
            <person name="Zhang M."/>
            <person name="Zhang Z."/>
            <person name="Goddard A.D."/>
            <person name="Wood W.I."/>
            <person name="Godowski P.J."/>
            <person name="Gray A.M."/>
        </authorList>
    </citation>
    <scope>NUCLEOTIDE SEQUENCE [LARGE SCALE MRNA]</scope>
</reference>
<reference key="3">
    <citation type="journal article" date="2004" name="Nat. Genet.">
        <title>Complete sequencing and characterization of 21,243 full-length human cDNAs.</title>
        <authorList>
            <person name="Ota T."/>
            <person name="Suzuki Y."/>
            <person name="Nishikawa T."/>
            <person name="Otsuki T."/>
            <person name="Sugiyama T."/>
            <person name="Irie R."/>
            <person name="Wakamatsu A."/>
            <person name="Hayashi K."/>
            <person name="Sato H."/>
            <person name="Nagai K."/>
            <person name="Kimura K."/>
            <person name="Makita H."/>
            <person name="Sekine M."/>
            <person name="Obayashi M."/>
            <person name="Nishi T."/>
            <person name="Shibahara T."/>
            <person name="Tanaka T."/>
            <person name="Ishii S."/>
            <person name="Yamamoto J."/>
            <person name="Saito K."/>
            <person name="Kawai Y."/>
            <person name="Isono Y."/>
            <person name="Nakamura Y."/>
            <person name="Nagahari K."/>
            <person name="Murakami K."/>
            <person name="Yasuda T."/>
            <person name="Iwayanagi T."/>
            <person name="Wagatsuma M."/>
            <person name="Shiratori A."/>
            <person name="Sudo H."/>
            <person name="Hosoiri T."/>
            <person name="Kaku Y."/>
            <person name="Kodaira H."/>
            <person name="Kondo H."/>
            <person name="Sugawara M."/>
            <person name="Takahashi M."/>
            <person name="Kanda K."/>
            <person name="Yokoi T."/>
            <person name="Furuya T."/>
            <person name="Kikkawa E."/>
            <person name="Omura Y."/>
            <person name="Abe K."/>
            <person name="Kamihara K."/>
            <person name="Katsuta N."/>
            <person name="Sato K."/>
            <person name="Tanikawa M."/>
            <person name="Yamazaki M."/>
            <person name="Ninomiya K."/>
            <person name="Ishibashi T."/>
            <person name="Yamashita H."/>
            <person name="Murakawa K."/>
            <person name="Fujimori K."/>
            <person name="Tanai H."/>
            <person name="Kimata M."/>
            <person name="Watanabe M."/>
            <person name="Hiraoka S."/>
            <person name="Chiba Y."/>
            <person name="Ishida S."/>
            <person name="Ono Y."/>
            <person name="Takiguchi S."/>
            <person name="Watanabe S."/>
            <person name="Yosida M."/>
            <person name="Hotuta T."/>
            <person name="Kusano J."/>
            <person name="Kanehori K."/>
            <person name="Takahashi-Fujii A."/>
            <person name="Hara H."/>
            <person name="Tanase T.-O."/>
            <person name="Nomura Y."/>
            <person name="Togiya S."/>
            <person name="Komai F."/>
            <person name="Hara R."/>
            <person name="Takeuchi K."/>
            <person name="Arita M."/>
            <person name="Imose N."/>
            <person name="Musashino K."/>
            <person name="Yuuki H."/>
            <person name="Oshima A."/>
            <person name="Sasaki N."/>
            <person name="Aotsuka S."/>
            <person name="Yoshikawa Y."/>
            <person name="Matsunawa H."/>
            <person name="Ichihara T."/>
            <person name="Shiohata N."/>
            <person name="Sano S."/>
            <person name="Moriya S."/>
            <person name="Momiyama H."/>
            <person name="Satoh N."/>
            <person name="Takami S."/>
            <person name="Terashima Y."/>
            <person name="Suzuki O."/>
            <person name="Nakagawa S."/>
            <person name="Senoh A."/>
            <person name="Mizoguchi H."/>
            <person name="Goto Y."/>
            <person name="Shimizu F."/>
            <person name="Wakebe H."/>
            <person name="Hishigaki H."/>
            <person name="Watanabe T."/>
            <person name="Sugiyama A."/>
            <person name="Takemoto M."/>
            <person name="Kawakami B."/>
            <person name="Yamazaki M."/>
            <person name="Watanabe K."/>
            <person name="Kumagai A."/>
            <person name="Itakura S."/>
            <person name="Fukuzumi Y."/>
            <person name="Fujimori Y."/>
            <person name="Komiyama M."/>
            <person name="Tashiro H."/>
            <person name="Tanigami A."/>
            <person name="Fujiwara T."/>
            <person name="Ono T."/>
            <person name="Yamada K."/>
            <person name="Fujii Y."/>
            <person name="Ozaki K."/>
            <person name="Hirao M."/>
            <person name="Ohmori Y."/>
            <person name="Kawabata A."/>
            <person name="Hikiji T."/>
            <person name="Kobatake N."/>
            <person name="Inagaki H."/>
            <person name="Ikema Y."/>
            <person name="Okamoto S."/>
            <person name="Okitani R."/>
            <person name="Kawakami T."/>
            <person name="Noguchi S."/>
            <person name="Itoh T."/>
            <person name="Shigeta K."/>
            <person name="Senba T."/>
            <person name="Matsumura K."/>
            <person name="Nakajima Y."/>
            <person name="Mizuno T."/>
            <person name="Morinaga M."/>
            <person name="Sasaki M."/>
            <person name="Togashi T."/>
            <person name="Oyama M."/>
            <person name="Hata H."/>
            <person name="Watanabe M."/>
            <person name="Komatsu T."/>
            <person name="Mizushima-Sugano J."/>
            <person name="Satoh T."/>
            <person name="Shirai Y."/>
            <person name="Takahashi Y."/>
            <person name="Nakagawa K."/>
            <person name="Okumura K."/>
            <person name="Nagase T."/>
            <person name="Nomura N."/>
            <person name="Kikuchi H."/>
            <person name="Masuho Y."/>
            <person name="Yamashita R."/>
            <person name="Nakai K."/>
            <person name="Yada T."/>
            <person name="Nakamura Y."/>
            <person name="Ohara O."/>
            <person name="Isogai T."/>
            <person name="Sugano S."/>
        </authorList>
    </citation>
    <scope>NUCLEOTIDE SEQUENCE [LARGE SCALE MRNA]</scope>
    <source>
        <tissue>Amygdala</tissue>
    </source>
</reference>
<reference key="4">
    <citation type="submission" date="2005-07" db="EMBL/GenBank/DDBJ databases">
        <authorList>
            <person name="Mural R.J."/>
            <person name="Istrail S."/>
            <person name="Sutton G.G."/>
            <person name="Florea L."/>
            <person name="Halpern A.L."/>
            <person name="Mobarry C.M."/>
            <person name="Lippert R."/>
            <person name="Walenz B."/>
            <person name="Shatkay H."/>
            <person name="Dew I."/>
            <person name="Miller J.R."/>
            <person name="Flanigan M.J."/>
            <person name="Edwards N.J."/>
            <person name="Bolanos R."/>
            <person name="Fasulo D."/>
            <person name="Halldorsson B.V."/>
            <person name="Hannenhalli S."/>
            <person name="Turner R."/>
            <person name="Yooseph S."/>
            <person name="Lu F."/>
            <person name="Nusskern D.R."/>
            <person name="Shue B.C."/>
            <person name="Zheng X.H."/>
            <person name="Zhong F."/>
            <person name="Delcher A.L."/>
            <person name="Huson D.H."/>
            <person name="Kravitz S.A."/>
            <person name="Mouchard L."/>
            <person name="Reinert K."/>
            <person name="Remington K.A."/>
            <person name="Clark A.G."/>
            <person name="Waterman M.S."/>
            <person name="Eichler E.E."/>
            <person name="Adams M.D."/>
            <person name="Hunkapiller M.W."/>
            <person name="Myers E.W."/>
            <person name="Venter J.C."/>
        </authorList>
    </citation>
    <scope>NUCLEOTIDE SEQUENCE [LARGE SCALE GENOMIC DNA]</scope>
</reference>
<reference key="5">
    <citation type="journal article" date="2004" name="Genome Res.">
        <title>The status, quality, and expansion of the NIH full-length cDNA project: the Mammalian Gene Collection (MGC).</title>
        <authorList>
            <consortium name="The MGC Project Team"/>
        </authorList>
    </citation>
    <scope>NUCLEOTIDE SEQUENCE [LARGE SCALE MRNA]</scope>
    <source>
        <tissue>Brain</tissue>
        <tissue>Pancreas</tissue>
        <tissue>Placenta</tissue>
    </source>
</reference>
<sequence length="313" mass="35066">MALLVDRVRGHWRIAAGLLFNLLVSICIVFLNKWIYVYHGFPNMSLTLVHFVVTWLGLYICQKLDIFAPKSLPPSRLLLLALSFCGFVVFTNLSLQNNTIGTYQLAKAMTTPVIIAIQTFCYQKTFSTRIQLTLIPITLGVILNSYYDVKFNFLGMVFAALGVLVTSLYQVWVGAKQHELQVNSMQLLYYQAPMSSAMLLVAVPFFEPVFGEGGIFGPWSVSALLMVLLSGVIAFMVNLSIYWIIGNTSPVTYNMFGHFKFCITLFGGYVLFKDPLSINQALGILCTLFGILAYTHFKLSEQEGSRSKLAQRP</sequence>
<organism>
    <name type="scientific">Homo sapiens</name>
    <name type="common">Human</name>
    <dbReference type="NCBI Taxonomy" id="9606"/>
    <lineage>
        <taxon>Eukaryota</taxon>
        <taxon>Metazoa</taxon>
        <taxon>Chordata</taxon>
        <taxon>Craniata</taxon>
        <taxon>Vertebrata</taxon>
        <taxon>Euteleostomi</taxon>
        <taxon>Mammalia</taxon>
        <taxon>Eutheria</taxon>
        <taxon>Euarchontoglires</taxon>
        <taxon>Primates</taxon>
        <taxon>Haplorrhini</taxon>
        <taxon>Catarrhini</taxon>
        <taxon>Hominidae</taxon>
        <taxon>Homo</taxon>
    </lineage>
</organism>
<name>S35E3_HUMAN</name>
<proteinExistence type="evidence at protein level"/>
<evidence type="ECO:0000250" key="1"/>
<evidence type="ECO:0000255" key="2"/>
<evidence type="ECO:0000305" key="3"/>
<accession>Q7Z769</accession>
<accession>A8K0T0</accession>
<accession>Q0P5Y5</accession>
<accession>Q9P0V1</accession>
<gene>
    <name type="primary">SLC35E3</name>
    <name type="synonym">BLOV1</name>
    <name type="ORF">UNQ3043/PRO9859</name>
</gene>
<feature type="chain" id="PRO_0000297899" description="Solute carrier family 35 member E3">
    <location>
        <begin position="1"/>
        <end position="313"/>
    </location>
</feature>
<feature type="transmembrane region" description="Helical" evidence="2">
    <location>
        <begin position="17"/>
        <end position="37"/>
    </location>
</feature>
<feature type="transmembrane region" description="Helical" evidence="2">
    <location>
        <begin position="40"/>
        <end position="60"/>
    </location>
</feature>
<feature type="transmembrane region" description="Helical" evidence="2">
    <location>
        <begin position="77"/>
        <end position="97"/>
    </location>
</feature>
<feature type="transmembrane region" description="Helical" evidence="2">
    <location>
        <begin position="126"/>
        <end position="143"/>
    </location>
</feature>
<feature type="transmembrane region" description="Helical" evidence="2">
    <location>
        <begin position="153"/>
        <end position="173"/>
    </location>
</feature>
<feature type="transmembrane region" description="Helical" evidence="2">
    <location>
        <begin position="187"/>
        <end position="206"/>
    </location>
</feature>
<feature type="transmembrane region" description="Helical" evidence="2">
    <location>
        <begin position="225"/>
        <end position="245"/>
    </location>
</feature>
<feature type="transmembrane region" description="Helical" evidence="2">
    <location>
        <begin position="252"/>
        <end position="272"/>
    </location>
</feature>
<feature type="transmembrane region" description="Helical" evidence="2">
    <location>
        <begin position="275"/>
        <end position="295"/>
    </location>
</feature>
<feature type="sequence conflict" description="In Ref. 5; AAH49192." evidence="3" ref="5">
    <original>C</original>
    <variation>S</variation>
    <location>
        <position position="61"/>
    </location>
</feature>
<feature type="sequence conflict" description="In Ref. 1; AAF73127." evidence="3" ref="1">
    <original>T</original>
    <variation>A</variation>
    <location>
        <position position="264"/>
    </location>
</feature>
<feature type="sequence conflict" description="In Ref. 1; AAF73127." evidence="3" ref="1">
    <original>G</original>
    <variation>D</variation>
    <location>
        <position position="283"/>
    </location>
</feature>
<keyword id="KW-0472">Membrane</keyword>
<keyword id="KW-1185">Reference proteome</keyword>
<keyword id="KW-0812">Transmembrane</keyword>
<keyword id="KW-1133">Transmembrane helix</keyword>
<protein>
    <recommendedName>
        <fullName>Solute carrier family 35 member E3</fullName>
    </recommendedName>
    <alternativeName>
        <fullName>Bladder cancer-overexpressed gene 1 protein</fullName>
    </alternativeName>
</protein>
<comment type="function">
    <text evidence="1">Putative transporter.</text>
</comment>
<comment type="interaction">
    <interactant intactId="EBI-13389236">
        <id>Q7Z769</id>
    </interactant>
    <interactant intactId="EBI-10827839">
        <id>Q15848</id>
        <label>ADIPOQ</label>
    </interactant>
    <organismsDiffer>false</organismsDiffer>
    <experiments>3</experiments>
</comment>
<comment type="interaction">
    <interactant intactId="EBI-13389236">
        <id>Q7Z769</id>
    </interactant>
    <interactant intactId="EBI-721179">
        <id>P27449</id>
        <label>ATP6V0C</label>
    </interactant>
    <organismsDiffer>false</organismsDiffer>
    <experiments>3</experiments>
</comment>
<comment type="interaction">
    <interactant intactId="EBI-13389236">
        <id>Q7Z769</id>
    </interactant>
    <interactant intactId="EBI-707714">
        <id>Q92843</id>
        <label>BCL2L2</label>
    </interactant>
    <organismsDiffer>false</organismsDiffer>
    <experiments>3</experiments>
</comment>
<comment type="interaction">
    <interactant intactId="EBI-13389236">
        <id>Q7Z769</id>
    </interactant>
    <interactant intactId="EBI-700794">
        <id>Q13323</id>
        <label>BIK</label>
    </interactant>
    <organismsDiffer>false</organismsDiffer>
    <experiments>3</experiments>
</comment>
<comment type="interaction">
    <interactant intactId="EBI-13389236">
        <id>Q7Z769</id>
    </interactant>
    <interactant intactId="EBI-752094">
        <id>Q12982</id>
        <label>BNIP2</label>
    </interactant>
    <organismsDiffer>false</organismsDiffer>
    <experiments>3</experiments>
</comment>
<comment type="interaction">
    <interactant intactId="EBI-13389236">
        <id>Q7Z769</id>
    </interactant>
    <interactant intactId="EBI-12003442">
        <id>Q8WVX3-2</id>
        <label>C4orf3</label>
    </interactant>
    <organismsDiffer>false</organismsDiffer>
    <experiments>3</experiments>
</comment>
<comment type="interaction">
    <interactant intactId="EBI-13389236">
        <id>Q7Z769</id>
    </interactant>
    <interactant intactId="EBI-10267100">
        <id>Q8N6G5</id>
        <label>CSGALNACT2</label>
    </interactant>
    <organismsDiffer>false</organismsDiffer>
    <experiments>3</experiments>
</comment>
<comment type="interaction">
    <interactant intactId="EBI-13389236">
        <id>Q7Z769</id>
    </interactant>
    <interactant intactId="EBI-18304435">
        <id>Q5JX71</id>
        <label>FAM209A</label>
    </interactant>
    <organismsDiffer>false</organismsDiffer>
    <experiments>3</experiments>
</comment>
<comment type="interaction">
    <interactant intactId="EBI-13389236">
        <id>Q7Z769</id>
    </interactant>
    <interactant intactId="EBI-2833872">
        <id>O15552</id>
        <label>FFAR2</label>
    </interactant>
    <organismsDiffer>false</organismsDiffer>
    <experiments>3</experiments>
</comment>
<comment type="interaction">
    <interactant intactId="EBI-13389236">
        <id>Q7Z769</id>
    </interactant>
    <interactant intactId="EBI-713304">
        <id>Q9H0Q3</id>
        <label>FXYD6</label>
    </interactant>
    <organismsDiffer>false</organismsDiffer>
    <experiments>3</experiments>
</comment>
<comment type="interaction">
    <interactant intactId="EBI-13389236">
        <id>Q7Z769</id>
    </interactant>
    <interactant intactId="EBI-18908258">
        <id>O00258</id>
        <label>GET1</label>
    </interactant>
    <organismsDiffer>false</organismsDiffer>
    <experiments>3</experiments>
</comment>
<comment type="interaction">
    <interactant intactId="EBI-13389236">
        <id>Q7Z769</id>
    </interactant>
    <interactant intactId="EBI-10178951">
        <id>O00155</id>
        <label>GPR25</label>
    </interactant>
    <organismsDiffer>false</organismsDiffer>
    <experiments>3</experiments>
</comment>
<comment type="interaction">
    <interactant intactId="EBI-13389236">
        <id>Q7Z769</id>
    </interactant>
    <interactant intactId="EBI-12133176">
        <id>Q9UIQ6-2</id>
        <label>LNPEP</label>
    </interactant>
    <organismsDiffer>false</organismsDiffer>
    <experiments>3</experiments>
</comment>
<comment type="interaction">
    <interactant intactId="EBI-13389236">
        <id>Q7Z769</id>
    </interactant>
    <interactant intactId="EBI-12188331">
        <id>P60201-2</id>
        <label>PLP1</label>
    </interactant>
    <organismsDiffer>false</organismsDiffer>
    <experiments>3</experiments>
</comment>
<comment type="interaction">
    <interactant intactId="EBI-13389236">
        <id>Q7Z769</id>
    </interactant>
    <interactant intactId="EBI-348482">
        <id>Q99942</id>
        <label>RNF5</label>
    </interactant>
    <organismsDiffer>false</organismsDiffer>
    <experiments>3</experiments>
</comment>
<comment type="interaction">
    <interactant intactId="EBI-13389236">
        <id>Q7Z769</id>
    </interactant>
    <interactant intactId="EBI-8636004">
        <id>Q96GQ5</id>
        <label>RUSF1</label>
    </interactant>
    <organismsDiffer>false</organismsDiffer>
    <experiments>3</experiments>
</comment>
<comment type="interaction">
    <interactant intactId="EBI-13389236">
        <id>Q7Z769</id>
    </interactant>
    <interactant intactId="EBI-9679163">
        <id>Q9Y6D0</id>
        <label>SELENOK</label>
    </interactant>
    <organismsDiffer>false</organismsDiffer>
    <experiments>3</experiments>
</comment>
<comment type="interaction">
    <interactant intactId="EBI-13389236">
        <id>Q7Z769</id>
    </interactant>
    <interactant intactId="EBI-3907610">
        <id>Q8N2U9</id>
        <label>SLC66A2</label>
    </interactant>
    <organismsDiffer>false</organismsDiffer>
    <experiments>3</experiments>
</comment>
<comment type="interaction">
    <interactant intactId="EBI-13389236">
        <id>Q7Z769</id>
    </interactant>
    <interactant intactId="EBI-742688">
        <id>Q9NZD8</id>
        <label>SPG21</label>
    </interactant>
    <organismsDiffer>false</organismsDiffer>
    <experiments>3</experiments>
</comment>
<comment type="interaction">
    <interactant intactId="EBI-13389236">
        <id>Q7Z769</id>
    </interactant>
    <interactant intactId="EBI-17280858">
        <id>Q8WWF3</id>
        <label>SSMEM1</label>
    </interactant>
    <organismsDiffer>false</organismsDiffer>
    <experiments>3</experiments>
</comment>
<comment type="interaction">
    <interactant intactId="EBI-13389236">
        <id>Q7Z769</id>
    </interactant>
    <interactant intactId="EBI-8638294">
        <id>Q9NUH8</id>
        <label>TMEM14B</label>
    </interactant>
    <organismsDiffer>false</organismsDiffer>
    <experiments>3</experiments>
</comment>
<comment type="interaction">
    <interactant intactId="EBI-13389236">
        <id>Q7Z769</id>
    </interactant>
    <interactant intactId="EBI-8642211">
        <id>Q8WY98</id>
        <label>TMEM234</label>
    </interactant>
    <organismsDiffer>false</organismsDiffer>
    <experiments>3</experiments>
</comment>
<comment type="interaction">
    <interactant intactId="EBI-13389236">
        <id>Q7Z769</id>
    </interactant>
    <interactant intactId="EBI-2852148">
        <id>Q9H2L4</id>
        <label>TMEM60</label>
    </interactant>
    <organismsDiffer>false</organismsDiffer>
    <experiments>3</experiments>
</comment>
<comment type="interaction">
    <interactant intactId="EBI-13389236">
        <id>Q7Z769</id>
    </interactant>
    <interactant intactId="EBI-10210710">
        <id>P49638</id>
        <label>TTPA</label>
    </interactant>
    <organismsDiffer>false</organismsDiffer>
    <experiments>3</experiments>
</comment>
<comment type="subcellular location">
    <subcellularLocation>
        <location evidence="3">Membrane</location>
        <topology evidence="3">Multi-pass membrane protein</topology>
    </subcellularLocation>
</comment>
<comment type="similarity">
    <text evidence="3">Belongs to the TPT transporter family. SLC35E subfamily.</text>
</comment>
<comment type="sequence caution" evidence="3">
    <conflict type="frameshift">
        <sequence resource="EMBL-CDS" id="AAF73127"/>
    </conflict>
</comment>
<dbReference type="EMBL" id="AF148713">
    <property type="protein sequence ID" value="AAF73127.1"/>
    <property type="status" value="ALT_FRAME"/>
    <property type="molecule type" value="mRNA"/>
</dbReference>
<dbReference type="EMBL" id="AY358943">
    <property type="protein sequence ID" value="AAQ89302.1"/>
    <property type="molecule type" value="mRNA"/>
</dbReference>
<dbReference type="EMBL" id="AK289645">
    <property type="protein sequence ID" value="BAF82334.1"/>
    <property type="molecule type" value="mRNA"/>
</dbReference>
<dbReference type="EMBL" id="CH471054">
    <property type="protein sequence ID" value="EAW97196.1"/>
    <property type="molecule type" value="Genomic_DNA"/>
</dbReference>
<dbReference type="EMBL" id="BC008412">
    <property type="protein sequence ID" value="AAH08412.1"/>
    <property type="molecule type" value="mRNA"/>
</dbReference>
<dbReference type="EMBL" id="BC021103">
    <property type="protein sequence ID" value="AAH21103.1"/>
    <property type="molecule type" value="mRNA"/>
</dbReference>
<dbReference type="EMBL" id="BC030504">
    <property type="protein sequence ID" value="AAH30504.1"/>
    <property type="molecule type" value="mRNA"/>
</dbReference>
<dbReference type="EMBL" id="BC049192">
    <property type="protein sequence ID" value="AAH49192.1"/>
    <property type="molecule type" value="mRNA"/>
</dbReference>
<dbReference type="CCDS" id="CCDS41808.1"/>
<dbReference type="RefSeq" id="NP_061126.2">
    <property type="nucleotide sequence ID" value="NM_018656.5"/>
</dbReference>
<dbReference type="SMR" id="Q7Z769"/>
<dbReference type="BioGRID" id="120688">
    <property type="interactions" value="26"/>
</dbReference>
<dbReference type="FunCoup" id="Q7Z769">
    <property type="interactions" value="658"/>
</dbReference>
<dbReference type="IntAct" id="Q7Z769">
    <property type="interactions" value="24"/>
</dbReference>
<dbReference type="STRING" id="9606.ENSP00000381089"/>
<dbReference type="TCDB" id="2.A.7.9.15">
    <property type="family name" value="the drug/metabolite transporter (dmt) superfamily"/>
</dbReference>
<dbReference type="iPTMnet" id="Q7Z769"/>
<dbReference type="PhosphoSitePlus" id="Q7Z769"/>
<dbReference type="BioMuta" id="SLC35E3"/>
<dbReference type="DMDM" id="74738870"/>
<dbReference type="jPOST" id="Q7Z769"/>
<dbReference type="MassIVE" id="Q7Z769"/>
<dbReference type="PaxDb" id="9606-ENSP00000381089"/>
<dbReference type="PeptideAtlas" id="Q7Z769"/>
<dbReference type="ProteomicsDB" id="69488"/>
<dbReference type="Antibodypedia" id="59245">
    <property type="antibodies" value="8 antibodies from 7 providers"/>
</dbReference>
<dbReference type="DNASU" id="55508"/>
<dbReference type="Ensembl" id="ENST00000398004.4">
    <property type="protein sequence ID" value="ENSP00000381089.2"/>
    <property type="gene ID" value="ENSG00000175782.11"/>
</dbReference>
<dbReference type="GeneID" id="55508"/>
<dbReference type="KEGG" id="hsa:55508"/>
<dbReference type="MANE-Select" id="ENST00000398004.4">
    <property type="protein sequence ID" value="ENSP00000381089.2"/>
    <property type="RefSeq nucleotide sequence ID" value="NM_018656.5"/>
    <property type="RefSeq protein sequence ID" value="NP_061126.2"/>
</dbReference>
<dbReference type="UCSC" id="uc001suh.4">
    <property type="organism name" value="human"/>
</dbReference>
<dbReference type="AGR" id="HGNC:20864"/>
<dbReference type="CTD" id="55508"/>
<dbReference type="DisGeNET" id="55508"/>
<dbReference type="GeneCards" id="SLC35E3"/>
<dbReference type="HGNC" id="HGNC:20864">
    <property type="gene designation" value="SLC35E3"/>
</dbReference>
<dbReference type="HPA" id="ENSG00000175782">
    <property type="expression patterns" value="Low tissue specificity"/>
</dbReference>
<dbReference type="MIM" id="620355">
    <property type="type" value="gene"/>
</dbReference>
<dbReference type="neXtProt" id="NX_Q7Z769"/>
<dbReference type="OpenTargets" id="ENSG00000175782"/>
<dbReference type="PharmGKB" id="PA128394684"/>
<dbReference type="VEuPathDB" id="HostDB:ENSG00000175782"/>
<dbReference type="eggNOG" id="KOG1441">
    <property type="taxonomic scope" value="Eukaryota"/>
</dbReference>
<dbReference type="GeneTree" id="ENSGT00730000111164"/>
<dbReference type="HOGENOM" id="CLU_048347_3_2_1"/>
<dbReference type="InParanoid" id="Q7Z769"/>
<dbReference type="OMA" id="WMVVNTL"/>
<dbReference type="OrthoDB" id="5547497at2759"/>
<dbReference type="PAN-GO" id="Q7Z769">
    <property type="GO annotations" value="3 GO annotations based on evolutionary models"/>
</dbReference>
<dbReference type="PhylomeDB" id="Q7Z769"/>
<dbReference type="TreeFam" id="TF329429"/>
<dbReference type="PathwayCommons" id="Q7Z769"/>
<dbReference type="SignaLink" id="Q7Z769"/>
<dbReference type="BioGRID-ORCS" id="55508">
    <property type="hits" value="14 hits in 1151 CRISPR screens"/>
</dbReference>
<dbReference type="ChiTaRS" id="SLC35E3">
    <property type="organism name" value="human"/>
</dbReference>
<dbReference type="GenomeRNAi" id="55508"/>
<dbReference type="Pharos" id="Q7Z769">
    <property type="development level" value="Tdark"/>
</dbReference>
<dbReference type="PRO" id="PR:Q7Z769"/>
<dbReference type="Proteomes" id="UP000005640">
    <property type="component" value="Chromosome 12"/>
</dbReference>
<dbReference type="RNAct" id="Q7Z769">
    <property type="molecule type" value="protein"/>
</dbReference>
<dbReference type="Bgee" id="ENSG00000175782">
    <property type="expression patterns" value="Expressed in endothelial cell and 186 other cell types or tissues"/>
</dbReference>
<dbReference type="ExpressionAtlas" id="Q7Z769">
    <property type="expression patterns" value="baseline and differential"/>
</dbReference>
<dbReference type="GO" id="GO:0005794">
    <property type="term" value="C:Golgi apparatus"/>
    <property type="evidence" value="ECO:0000318"/>
    <property type="project" value="GO_Central"/>
</dbReference>
<dbReference type="GO" id="GO:0016020">
    <property type="term" value="C:membrane"/>
    <property type="evidence" value="ECO:0007669"/>
    <property type="project" value="UniProtKB-SubCell"/>
</dbReference>
<dbReference type="GO" id="GO:0015297">
    <property type="term" value="F:antiporter activity"/>
    <property type="evidence" value="ECO:0000318"/>
    <property type="project" value="GO_Central"/>
</dbReference>
<dbReference type="GO" id="GO:0005338">
    <property type="term" value="F:nucleotide-sugar transmembrane transporter activity"/>
    <property type="evidence" value="ECO:0000318"/>
    <property type="project" value="GO_Central"/>
</dbReference>
<dbReference type="GO" id="GO:0055085">
    <property type="term" value="P:transmembrane transport"/>
    <property type="evidence" value="ECO:0000318"/>
    <property type="project" value="GO_Central"/>
</dbReference>
<dbReference type="InterPro" id="IPR004853">
    <property type="entry name" value="Sugar_P_trans_dom"/>
</dbReference>
<dbReference type="InterPro" id="IPR050186">
    <property type="entry name" value="TPT_transporter"/>
</dbReference>
<dbReference type="PANTHER" id="PTHR11132">
    <property type="entry name" value="SOLUTE CARRIER FAMILY 35"/>
    <property type="match status" value="1"/>
</dbReference>
<dbReference type="Pfam" id="PF03151">
    <property type="entry name" value="TPT"/>
    <property type="match status" value="1"/>
</dbReference>
<dbReference type="SUPFAM" id="SSF103481">
    <property type="entry name" value="Multidrug resistance efflux transporter EmrE"/>
    <property type="match status" value="1"/>
</dbReference>